<sequence length="286" mass="30844">MVAKILDGKQIAKDYRQGLQDQVEALKEKGFTPKLSVILVGNDGASQSYVRSKKKAAEKIGMISEIVHLEETATEEEVLNELNRLNNDDSVSGILVQVPLPKQVSEQKILEAINPEKDVDGFHPINIGKLYIDEQTFVPCTPLGIMEILKHADIDLEGKNAVVIGRSHIVGQPVSKLLLQKNASVTILHSRSKDMASYLKDADVIVSAVGKPGLVTKDVVKEGAVIIDVGNTPDENGKLKGDVDYDAVKEIAGAITPVPGGVGPLTITMVLNNTLLAEKMRRGIDS</sequence>
<name>FOLD_STAAS</name>
<comment type="function">
    <text evidence="1">Catalyzes the oxidation of 5,10-methylenetetrahydrofolate to 5,10-methenyltetrahydrofolate and then the hydrolysis of 5,10-methenyltetrahydrofolate to 10-formyltetrahydrofolate.</text>
</comment>
<comment type="catalytic activity">
    <reaction evidence="1">
        <text>(6R)-5,10-methylene-5,6,7,8-tetrahydrofolate + NADP(+) = (6R)-5,10-methenyltetrahydrofolate + NADPH</text>
        <dbReference type="Rhea" id="RHEA:22812"/>
        <dbReference type="ChEBI" id="CHEBI:15636"/>
        <dbReference type="ChEBI" id="CHEBI:57455"/>
        <dbReference type="ChEBI" id="CHEBI:57783"/>
        <dbReference type="ChEBI" id="CHEBI:58349"/>
        <dbReference type="EC" id="1.5.1.5"/>
    </reaction>
</comment>
<comment type="catalytic activity">
    <reaction evidence="1">
        <text>(6R)-5,10-methenyltetrahydrofolate + H2O = (6R)-10-formyltetrahydrofolate + H(+)</text>
        <dbReference type="Rhea" id="RHEA:23700"/>
        <dbReference type="ChEBI" id="CHEBI:15377"/>
        <dbReference type="ChEBI" id="CHEBI:15378"/>
        <dbReference type="ChEBI" id="CHEBI:57455"/>
        <dbReference type="ChEBI" id="CHEBI:195366"/>
        <dbReference type="EC" id="3.5.4.9"/>
    </reaction>
</comment>
<comment type="pathway">
    <text evidence="1">One-carbon metabolism; tetrahydrofolate interconversion.</text>
</comment>
<comment type="subunit">
    <text evidence="1">Homodimer.</text>
</comment>
<comment type="similarity">
    <text evidence="1">Belongs to the tetrahydrofolate dehydrogenase/cyclohydrolase family.</text>
</comment>
<gene>
    <name evidence="1" type="primary">folD</name>
    <name type="ordered locus">SAS0999</name>
</gene>
<evidence type="ECO:0000255" key="1">
    <source>
        <dbReference type="HAMAP-Rule" id="MF_01576"/>
    </source>
</evidence>
<protein>
    <recommendedName>
        <fullName evidence="1">Bifunctional protein FolD</fullName>
    </recommendedName>
    <domain>
        <recommendedName>
            <fullName evidence="1">Methylenetetrahydrofolate dehydrogenase</fullName>
            <ecNumber evidence="1">1.5.1.5</ecNumber>
        </recommendedName>
    </domain>
    <domain>
        <recommendedName>
            <fullName evidence="1">Methenyltetrahydrofolate cyclohydrolase</fullName>
            <ecNumber evidence="1">3.5.4.9</ecNumber>
        </recommendedName>
    </domain>
</protein>
<keyword id="KW-0028">Amino-acid biosynthesis</keyword>
<keyword id="KW-0368">Histidine biosynthesis</keyword>
<keyword id="KW-0378">Hydrolase</keyword>
<keyword id="KW-0486">Methionine biosynthesis</keyword>
<keyword id="KW-0511">Multifunctional enzyme</keyword>
<keyword id="KW-0521">NADP</keyword>
<keyword id="KW-0554">One-carbon metabolism</keyword>
<keyword id="KW-0560">Oxidoreductase</keyword>
<keyword id="KW-0658">Purine biosynthesis</keyword>
<feature type="chain" id="PRO_0000265949" description="Bifunctional protein FolD">
    <location>
        <begin position="1"/>
        <end position="286"/>
    </location>
</feature>
<feature type="binding site" evidence="1">
    <location>
        <begin position="165"/>
        <end position="167"/>
    </location>
    <ligand>
        <name>NADP(+)</name>
        <dbReference type="ChEBI" id="CHEBI:58349"/>
    </ligand>
</feature>
<feature type="binding site" evidence="1">
    <location>
        <position position="190"/>
    </location>
    <ligand>
        <name>NADP(+)</name>
        <dbReference type="ChEBI" id="CHEBI:58349"/>
    </ligand>
</feature>
<dbReference type="EC" id="1.5.1.5" evidence="1"/>
<dbReference type="EC" id="3.5.4.9" evidence="1"/>
<dbReference type="EMBL" id="BX571857">
    <property type="protein sequence ID" value="CAG42773.1"/>
    <property type="molecule type" value="Genomic_DNA"/>
</dbReference>
<dbReference type="RefSeq" id="WP_000225837.1">
    <property type="nucleotide sequence ID" value="NC_002953.3"/>
</dbReference>
<dbReference type="SMR" id="Q6GAF0"/>
<dbReference type="KEGG" id="sas:SAS0999"/>
<dbReference type="HOGENOM" id="CLU_034045_2_1_9"/>
<dbReference type="UniPathway" id="UPA00193"/>
<dbReference type="GO" id="GO:0005829">
    <property type="term" value="C:cytosol"/>
    <property type="evidence" value="ECO:0007669"/>
    <property type="project" value="TreeGrafter"/>
</dbReference>
<dbReference type="GO" id="GO:0004477">
    <property type="term" value="F:methenyltetrahydrofolate cyclohydrolase activity"/>
    <property type="evidence" value="ECO:0007669"/>
    <property type="project" value="UniProtKB-UniRule"/>
</dbReference>
<dbReference type="GO" id="GO:0004488">
    <property type="term" value="F:methylenetetrahydrofolate dehydrogenase (NADP+) activity"/>
    <property type="evidence" value="ECO:0007669"/>
    <property type="project" value="UniProtKB-UniRule"/>
</dbReference>
<dbReference type="GO" id="GO:0000105">
    <property type="term" value="P:L-histidine biosynthetic process"/>
    <property type="evidence" value="ECO:0007669"/>
    <property type="project" value="UniProtKB-KW"/>
</dbReference>
<dbReference type="GO" id="GO:0009086">
    <property type="term" value="P:methionine biosynthetic process"/>
    <property type="evidence" value="ECO:0007669"/>
    <property type="project" value="UniProtKB-KW"/>
</dbReference>
<dbReference type="GO" id="GO:0006164">
    <property type="term" value="P:purine nucleotide biosynthetic process"/>
    <property type="evidence" value="ECO:0007669"/>
    <property type="project" value="UniProtKB-KW"/>
</dbReference>
<dbReference type="GO" id="GO:0035999">
    <property type="term" value="P:tetrahydrofolate interconversion"/>
    <property type="evidence" value="ECO:0007669"/>
    <property type="project" value="UniProtKB-UniRule"/>
</dbReference>
<dbReference type="CDD" id="cd01080">
    <property type="entry name" value="NAD_bind_m-THF_DH_Cyclohyd"/>
    <property type="match status" value="1"/>
</dbReference>
<dbReference type="FunFam" id="3.40.50.10860:FF:000001">
    <property type="entry name" value="Bifunctional protein FolD"/>
    <property type="match status" value="1"/>
</dbReference>
<dbReference type="FunFam" id="3.40.50.720:FF:000094">
    <property type="entry name" value="Bifunctional protein FolD"/>
    <property type="match status" value="1"/>
</dbReference>
<dbReference type="Gene3D" id="3.40.50.10860">
    <property type="entry name" value="Leucine Dehydrogenase, chain A, domain 1"/>
    <property type="match status" value="1"/>
</dbReference>
<dbReference type="Gene3D" id="3.40.50.720">
    <property type="entry name" value="NAD(P)-binding Rossmann-like Domain"/>
    <property type="match status" value="1"/>
</dbReference>
<dbReference type="HAMAP" id="MF_01576">
    <property type="entry name" value="THF_DHG_CYH"/>
    <property type="match status" value="1"/>
</dbReference>
<dbReference type="InterPro" id="IPR046346">
    <property type="entry name" value="Aminoacid_DH-like_N_sf"/>
</dbReference>
<dbReference type="InterPro" id="IPR036291">
    <property type="entry name" value="NAD(P)-bd_dom_sf"/>
</dbReference>
<dbReference type="InterPro" id="IPR000672">
    <property type="entry name" value="THF_DH/CycHdrlase"/>
</dbReference>
<dbReference type="InterPro" id="IPR020630">
    <property type="entry name" value="THF_DH/CycHdrlase_cat_dom"/>
</dbReference>
<dbReference type="InterPro" id="IPR020631">
    <property type="entry name" value="THF_DH/CycHdrlase_NAD-bd_dom"/>
</dbReference>
<dbReference type="NCBIfam" id="NF010772">
    <property type="entry name" value="PRK14175.1"/>
    <property type="match status" value="1"/>
</dbReference>
<dbReference type="PANTHER" id="PTHR48099:SF5">
    <property type="entry name" value="C-1-TETRAHYDROFOLATE SYNTHASE, CYTOPLASMIC"/>
    <property type="match status" value="1"/>
</dbReference>
<dbReference type="PANTHER" id="PTHR48099">
    <property type="entry name" value="C-1-TETRAHYDROFOLATE SYNTHASE, CYTOPLASMIC-RELATED"/>
    <property type="match status" value="1"/>
</dbReference>
<dbReference type="Pfam" id="PF00763">
    <property type="entry name" value="THF_DHG_CYH"/>
    <property type="match status" value="1"/>
</dbReference>
<dbReference type="Pfam" id="PF02882">
    <property type="entry name" value="THF_DHG_CYH_C"/>
    <property type="match status" value="1"/>
</dbReference>
<dbReference type="PRINTS" id="PR00085">
    <property type="entry name" value="THFDHDRGNASE"/>
</dbReference>
<dbReference type="SUPFAM" id="SSF53223">
    <property type="entry name" value="Aminoacid dehydrogenase-like, N-terminal domain"/>
    <property type="match status" value="1"/>
</dbReference>
<dbReference type="SUPFAM" id="SSF51735">
    <property type="entry name" value="NAD(P)-binding Rossmann-fold domains"/>
    <property type="match status" value="1"/>
</dbReference>
<organism>
    <name type="scientific">Staphylococcus aureus (strain MSSA476)</name>
    <dbReference type="NCBI Taxonomy" id="282459"/>
    <lineage>
        <taxon>Bacteria</taxon>
        <taxon>Bacillati</taxon>
        <taxon>Bacillota</taxon>
        <taxon>Bacilli</taxon>
        <taxon>Bacillales</taxon>
        <taxon>Staphylococcaceae</taxon>
        <taxon>Staphylococcus</taxon>
    </lineage>
</organism>
<reference key="1">
    <citation type="journal article" date="2004" name="Proc. Natl. Acad. Sci. U.S.A.">
        <title>Complete genomes of two clinical Staphylococcus aureus strains: evidence for the rapid evolution of virulence and drug resistance.</title>
        <authorList>
            <person name="Holden M.T.G."/>
            <person name="Feil E.J."/>
            <person name="Lindsay J.A."/>
            <person name="Peacock S.J."/>
            <person name="Day N.P.J."/>
            <person name="Enright M.C."/>
            <person name="Foster T.J."/>
            <person name="Moore C.E."/>
            <person name="Hurst L."/>
            <person name="Atkin R."/>
            <person name="Barron A."/>
            <person name="Bason N."/>
            <person name="Bentley S.D."/>
            <person name="Chillingworth C."/>
            <person name="Chillingworth T."/>
            <person name="Churcher C."/>
            <person name="Clark L."/>
            <person name="Corton C."/>
            <person name="Cronin A."/>
            <person name="Doggett J."/>
            <person name="Dowd L."/>
            <person name="Feltwell T."/>
            <person name="Hance Z."/>
            <person name="Harris B."/>
            <person name="Hauser H."/>
            <person name="Holroyd S."/>
            <person name="Jagels K."/>
            <person name="James K.D."/>
            <person name="Lennard N."/>
            <person name="Line A."/>
            <person name="Mayes R."/>
            <person name="Moule S."/>
            <person name="Mungall K."/>
            <person name="Ormond D."/>
            <person name="Quail M.A."/>
            <person name="Rabbinowitsch E."/>
            <person name="Rutherford K.M."/>
            <person name="Sanders M."/>
            <person name="Sharp S."/>
            <person name="Simmonds M."/>
            <person name="Stevens K."/>
            <person name="Whitehead S."/>
            <person name="Barrell B.G."/>
            <person name="Spratt B.G."/>
            <person name="Parkhill J."/>
        </authorList>
    </citation>
    <scope>NUCLEOTIDE SEQUENCE [LARGE SCALE GENOMIC DNA]</scope>
    <source>
        <strain>MSSA476</strain>
    </source>
</reference>
<proteinExistence type="inferred from homology"/>
<accession>Q6GAF0</accession>